<keyword id="KW-0067">ATP-binding</keyword>
<keyword id="KW-1003">Cell membrane</keyword>
<keyword id="KW-0472">Membrane</keyword>
<keyword id="KW-0547">Nucleotide-binding</keyword>
<keyword id="KW-1185">Reference proteome</keyword>
<keyword id="KW-1278">Translocase</keyword>
<keyword id="KW-0813">Transport</keyword>
<comment type="function">
    <text evidence="1">Part of the ABC transporter complex SsuABC involved in aliphatic sulfonates import. Responsible for energy coupling to the transport system.</text>
</comment>
<comment type="catalytic activity">
    <reaction evidence="1">
        <text>ATP + H2O + aliphatic sulfonate-[sulfonate-binding protein]Side 1 = ADP + phosphate + aliphatic sulfonateSide 2 + [sulfonate-binding protein]Side 1.</text>
        <dbReference type="EC" id="7.6.2.14"/>
    </reaction>
</comment>
<comment type="subunit">
    <text evidence="1">The complex is composed of two ATP-binding proteins (SsuB), two transmembrane proteins (SsuC) and a solute-binding protein (SsuA).</text>
</comment>
<comment type="subcellular location">
    <subcellularLocation>
        <location evidence="1">Cell membrane</location>
        <topology evidence="1">Peripheral membrane protein</topology>
    </subcellularLocation>
</comment>
<comment type="similarity">
    <text evidence="1">Belongs to the ABC transporter superfamily. Aliphatic sulfonates importer (TC 3.A.1.17.2) family.</text>
</comment>
<name>SSUB_FRACC</name>
<organism>
    <name type="scientific">Frankia casuarinae (strain DSM 45818 / CECT 9043 / HFP020203 / CcI3)</name>
    <dbReference type="NCBI Taxonomy" id="106370"/>
    <lineage>
        <taxon>Bacteria</taxon>
        <taxon>Bacillati</taxon>
        <taxon>Actinomycetota</taxon>
        <taxon>Actinomycetes</taxon>
        <taxon>Frankiales</taxon>
        <taxon>Frankiaceae</taxon>
        <taxon>Frankia</taxon>
    </lineage>
</organism>
<dbReference type="EC" id="7.6.2.14" evidence="1"/>
<dbReference type="EMBL" id="CP000249">
    <property type="protein sequence ID" value="ABD09637.1"/>
    <property type="molecule type" value="Genomic_DNA"/>
</dbReference>
<dbReference type="RefSeq" id="WP_011434717.1">
    <property type="nucleotide sequence ID" value="NC_007777.1"/>
</dbReference>
<dbReference type="SMR" id="Q2JGF5"/>
<dbReference type="STRING" id="106370.Francci3_0249"/>
<dbReference type="KEGG" id="fra:Francci3_0249"/>
<dbReference type="eggNOG" id="COG1116">
    <property type="taxonomic scope" value="Bacteria"/>
</dbReference>
<dbReference type="HOGENOM" id="CLU_000604_1_22_11"/>
<dbReference type="OrthoDB" id="4533303at2"/>
<dbReference type="PhylomeDB" id="Q2JGF5"/>
<dbReference type="Proteomes" id="UP000001937">
    <property type="component" value="Chromosome"/>
</dbReference>
<dbReference type="GO" id="GO:0005886">
    <property type="term" value="C:plasma membrane"/>
    <property type="evidence" value="ECO:0007669"/>
    <property type="project" value="UniProtKB-SubCell"/>
</dbReference>
<dbReference type="GO" id="GO:0005524">
    <property type="term" value="F:ATP binding"/>
    <property type="evidence" value="ECO:0007669"/>
    <property type="project" value="UniProtKB-KW"/>
</dbReference>
<dbReference type="GO" id="GO:0016887">
    <property type="term" value="F:ATP hydrolysis activity"/>
    <property type="evidence" value="ECO:0007669"/>
    <property type="project" value="InterPro"/>
</dbReference>
<dbReference type="Gene3D" id="3.40.50.300">
    <property type="entry name" value="P-loop containing nucleotide triphosphate hydrolases"/>
    <property type="match status" value="1"/>
</dbReference>
<dbReference type="InterPro" id="IPR003593">
    <property type="entry name" value="AAA+_ATPase"/>
</dbReference>
<dbReference type="InterPro" id="IPR003439">
    <property type="entry name" value="ABC_transporter-like_ATP-bd"/>
</dbReference>
<dbReference type="InterPro" id="IPR017871">
    <property type="entry name" value="ABC_transporter-like_CS"/>
</dbReference>
<dbReference type="InterPro" id="IPR050166">
    <property type="entry name" value="ABC_transporter_ATP-bind"/>
</dbReference>
<dbReference type="InterPro" id="IPR027417">
    <property type="entry name" value="P-loop_NTPase"/>
</dbReference>
<dbReference type="PANTHER" id="PTHR42788:SF17">
    <property type="entry name" value="ALIPHATIC SULFONATES IMPORT ATP-BINDING PROTEIN SSUB"/>
    <property type="match status" value="1"/>
</dbReference>
<dbReference type="PANTHER" id="PTHR42788">
    <property type="entry name" value="TAURINE IMPORT ATP-BINDING PROTEIN-RELATED"/>
    <property type="match status" value="1"/>
</dbReference>
<dbReference type="Pfam" id="PF00005">
    <property type="entry name" value="ABC_tran"/>
    <property type="match status" value="1"/>
</dbReference>
<dbReference type="SMART" id="SM00382">
    <property type="entry name" value="AAA"/>
    <property type="match status" value="1"/>
</dbReference>
<dbReference type="SUPFAM" id="SSF52540">
    <property type="entry name" value="P-loop containing nucleoside triphosphate hydrolases"/>
    <property type="match status" value="1"/>
</dbReference>
<dbReference type="PROSITE" id="PS00211">
    <property type="entry name" value="ABC_TRANSPORTER_1"/>
    <property type="match status" value="1"/>
</dbReference>
<dbReference type="PROSITE" id="PS50893">
    <property type="entry name" value="ABC_TRANSPORTER_2"/>
    <property type="match status" value="1"/>
</dbReference>
<dbReference type="PROSITE" id="PS51291">
    <property type="entry name" value="SSUB"/>
    <property type="match status" value="1"/>
</dbReference>
<gene>
    <name evidence="1" type="primary">ssuB</name>
    <name type="ordered locus">Francci3_0249</name>
</gene>
<evidence type="ECO:0000255" key="1">
    <source>
        <dbReference type="HAMAP-Rule" id="MF_01724"/>
    </source>
</evidence>
<evidence type="ECO:0000256" key="2">
    <source>
        <dbReference type="SAM" id="MobiDB-lite"/>
    </source>
</evidence>
<reference key="1">
    <citation type="journal article" date="2007" name="Genome Res.">
        <title>Genome characteristics of facultatively symbiotic Frankia sp. strains reflect host range and host plant biogeography.</title>
        <authorList>
            <person name="Normand P."/>
            <person name="Lapierre P."/>
            <person name="Tisa L.S."/>
            <person name="Gogarten J.P."/>
            <person name="Alloisio N."/>
            <person name="Bagnarol E."/>
            <person name="Bassi C.A."/>
            <person name="Berry A.M."/>
            <person name="Bickhart D.M."/>
            <person name="Choisne N."/>
            <person name="Couloux A."/>
            <person name="Cournoyer B."/>
            <person name="Cruveiller S."/>
            <person name="Daubin V."/>
            <person name="Demange N."/>
            <person name="Francino M.P."/>
            <person name="Goltsman E."/>
            <person name="Huang Y."/>
            <person name="Kopp O.R."/>
            <person name="Labarre L."/>
            <person name="Lapidus A."/>
            <person name="Lavire C."/>
            <person name="Marechal J."/>
            <person name="Martinez M."/>
            <person name="Mastronunzio J.E."/>
            <person name="Mullin B.C."/>
            <person name="Niemann J."/>
            <person name="Pujic P."/>
            <person name="Rawnsley T."/>
            <person name="Rouy Z."/>
            <person name="Schenowitz C."/>
            <person name="Sellstedt A."/>
            <person name="Tavares F."/>
            <person name="Tomkins J.P."/>
            <person name="Vallenet D."/>
            <person name="Valverde C."/>
            <person name="Wall L.G."/>
            <person name="Wang Y."/>
            <person name="Medigue C."/>
            <person name="Benson D.R."/>
        </authorList>
    </citation>
    <scope>NUCLEOTIDE SEQUENCE [LARGE SCALE GENOMIC DNA]</scope>
    <source>
        <strain>DSM 45818 / CECT 9043 / HFP020203 / CcI3</strain>
    </source>
</reference>
<protein>
    <recommendedName>
        <fullName evidence="1">Aliphatic sulfonates import ATP-binding protein SsuB</fullName>
        <ecNumber evidence="1">7.6.2.14</ecNumber>
    </recommendedName>
</protein>
<accession>Q2JGF5</accession>
<feature type="chain" id="PRO_5000106598" description="Aliphatic sulfonates import ATP-binding protein SsuB">
    <location>
        <begin position="1"/>
        <end position="302"/>
    </location>
</feature>
<feature type="domain" description="ABC transporter" evidence="1">
    <location>
        <begin position="70"/>
        <end position="284"/>
    </location>
</feature>
<feature type="region of interest" description="Disordered" evidence="2">
    <location>
        <begin position="30"/>
        <end position="65"/>
    </location>
</feature>
<feature type="compositionally biased region" description="Low complexity" evidence="2">
    <location>
        <begin position="30"/>
        <end position="57"/>
    </location>
</feature>
<feature type="binding site" evidence="1">
    <location>
        <begin position="102"/>
        <end position="109"/>
    </location>
    <ligand>
        <name>ATP</name>
        <dbReference type="ChEBI" id="CHEBI:30616"/>
    </ligand>
</feature>
<proteinExistence type="inferred from homology"/>
<sequence length="302" mass="32396">MAPRLRRNLSTDTDTNTTAAATAVATLERPATADAQHTADAQHTADAQHTADAQHTAETAETRGADGAAIRIRGLRRTFGNHTVLDGLDLTVASGEFVALLGRSGSGKSTLIRILGGFDGGISGEVLATRQRSVVFQEARLLPWTRTLANVTIGLSGRDVAERGRVALAEVGLAGRERSWPVALSGGEAQRVALARALVREPDLVMLDEPFGALDALTRIRMHALLQQLCRRHRPAVLFVTHDVDEAILLADRVLVLTEGRLSLDVPVDVASPRRRTDPAFDRLRSTLLAELGVDELAEGDH</sequence>